<proteinExistence type="inferred from homology"/>
<dbReference type="EC" id="1.3.98.5" evidence="1"/>
<dbReference type="EMBL" id="CP001283">
    <property type="protein sequence ID" value="ACK88586.1"/>
    <property type="molecule type" value="Genomic_DNA"/>
</dbReference>
<dbReference type="RefSeq" id="WP_001287584.1">
    <property type="nucleotide sequence ID" value="NC_011773.1"/>
</dbReference>
<dbReference type="SMR" id="B7JHL3"/>
<dbReference type="KEGG" id="bcu:BCAH820_5483"/>
<dbReference type="HOGENOM" id="CLU_063226_1_0_9"/>
<dbReference type="UniPathway" id="UPA00252"/>
<dbReference type="Proteomes" id="UP000001363">
    <property type="component" value="Chromosome"/>
</dbReference>
<dbReference type="GO" id="GO:0020037">
    <property type="term" value="F:heme binding"/>
    <property type="evidence" value="ECO:0007669"/>
    <property type="project" value="InterPro"/>
</dbReference>
<dbReference type="GO" id="GO:0046872">
    <property type="term" value="F:metal ion binding"/>
    <property type="evidence" value="ECO:0007669"/>
    <property type="project" value="UniProtKB-KW"/>
</dbReference>
<dbReference type="GO" id="GO:0016634">
    <property type="term" value="F:oxidoreductase activity, acting on the CH-CH group of donors, oxygen as acceptor"/>
    <property type="evidence" value="ECO:0007669"/>
    <property type="project" value="UniProtKB-UniRule"/>
</dbReference>
<dbReference type="GO" id="GO:0004601">
    <property type="term" value="F:peroxidase activity"/>
    <property type="evidence" value="ECO:0007669"/>
    <property type="project" value="InterPro"/>
</dbReference>
<dbReference type="GO" id="GO:0006785">
    <property type="term" value="P:heme B biosynthetic process"/>
    <property type="evidence" value="ECO:0007669"/>
    <property type="project" value="UniProtKB-UniRule"/>
</dbReference>
<dbReference type="Gene3D" id="3.30.70.1030">
    <property type="entry name" value="Apc35880, domain 1"/>
    <property type="match status" value="2"/>
</dbReference>
<dbReference type="HAMAP" id="MF_01442">
    <property type="entry name" value="Coproheme_decarbox_1"/>
    <property type="match status" value="1"/>
</dbReference>
<dbReference type="InterPro" id="IPR031332">
    <property type="entry name" value="CHDC"/>
</dbReference>
<dbReference type="InterPro" id="IPR010644">
    <property type="entry name" value="ChdC/CLD"/>
</dbReference>
<dbReference type="InterPro" id="IPR011008">
    <property type="entry name" value="Dimeric_a/b-barrel"/>
</dbReference>
<dbReference type="NCBIfam" id="NF008913">
    <property type="entry name" value="PRK12276.1"/>
    <property type="match status" value="1"/>
</dbReference>
<dbReference type="PANTHER" id="PTHR36843:SF1">
    <property type="entry name" value="COPROHEME DECARBOXYLASE"/>
    <property type="match status" value="1"/>
</dbReference>
<dbReference type="PANTHER" id="PTHR36843">
    <property type="entry name" value="HEME-DEPENDENT PEROXIDASE YWFI-RELATED"/>
    <property type="match status" value="1"/>
</dbReference>
<dbReference type="Pfam" id="PF06778">
    <property type="entry name" value="Chlor_dismutase"/>
    <property type="match status" value="1"/>
</dbReference>
<dbReference type="SUPFAM" id="SSF54909">
    <property type="entry name" value="Dimeric alpha+beta barrel"/>
    <property type="match status" value="1"/>
</dbReference>
<name>CHDC_BACC0</name>
<gene>
    <name evidence="1" type="primary">chdC</name>
    <name type="ordered locus">BCAH820_5483</name>
</gene>
<keyword id="KW-0349">Heme</keyword>
<keyword id="KW-0350">Heme biosynthesis</keyword>
<keyword id="KW-0408">Iron</keyword>
<keyword id="KW-0479">Metal-binding</keyword>
<keyword id="KW-0560">Oxidoreductase</keyword>
<comment type="function">
    <text evidence="1">Involved in coproporphyrin-dependent heme b biosynthesis. Catalyzes the decarboxylation of Fe-coproporphyrin III (coproheme) to heme b (protoheme IX), the last step of the pathway. The reaction occurs in a stepwise manner with a three-propionate intermediate.</text>
</comment>
<comment type="catalytic activity">
    <reaction evidence="1">
        <text>Fe-coproporphyrin III + 2 H2O2 + 2 H(+) = heme b + 2 CO2 + 4 H2O</text>
        <dbReference type="Rhea" id="RHEA:56516"/>
        <dbReference type="ChEBI" id="CHEBI:15377"/>
        <dbReference type="ChEBI" id="CHEBI:15378"/>
        <dbReference type="ChEBI" id="CHEBI:16240"/>
        <dbReference type="ChEBI" id="CHEBI:16526"/>
        <dbReference type="ChEBI" id="CHEBI:60344"/>
        <dbReference type="ChEBI" id="CHEBI:68438"/>
        <dbReference type="EC" id="1.3.98.5"/>
    </reaction>
    <physiologicalReaction direction="left-to-right" evidence="1">
        <dbReference type="Rhea" id="RHEA:56517"/>
    </physiologicalReaction>
</comment>
<comment type="catalytic activity">
    <reaction evidence="1">
        <text>Fe-coproporphyrin III + H2O2 + H(+) = harderoheme III + CO2 + 2 H2O</text>
        <dbReference type="Rhea" id="RHEA:57940"/>
        <dbReference type="ChEBI" id="CHEBI:15377"/>
        <dbReference type="ChEBI" id="CHEBI:15378"/>
        <dbReference type="ChEBI" id="CHEBI:16240"/>
        <dbReference type="ChEBI" id="CHEBI:16526"/>
        <dbReference type="ChEBI" id="CHEBI:68438"/>
        <dbReference type="ChEBI" id="CHEBI:142463"/>
    </reaction>
    <physiologicalReaction direction="left-to-right" evidence="1">
        <dbReference type="Rhea" id="RHEA:57941"/>
    </physiologicalReaction>
</comment>
<comment type="catalytic activity">
    <reaction evidence="1">
        <text>harderoheme III + H2O2 + H(+) = heme b + CO2 + 2 H2O</text>
        <dbReference type="Rhea" id="RHEA:57944"/>
        <dbReference type="ChEBI" id="CHEBI:15377"/>
        <dbReference type="ChEBI" id="CHEBI:15378"/>
        <dbReference type="ChEBI" id="CHEBI:16240"/>
        <dbReference type="ChEBI" id="CHEBI:16526"/>
        <dbReference type="ChEBI" id="CHEBI:60344"/>
        <dbReference type="ChEBI" id="CHEBI:142463"/>
    </reaction>
    <physiologicalReaction direction="left-to-right" evidence="1">
        <dbReference type="Rhea" id="RHEA:57945"/>
    </physiologicalReaction>
</comment>
<comment type="cofactor">
    <cofactor evidence="1">
        <name>Fe-coproporphyrin III</name>
        <dbReference type="ChEBI" id="CHEBI:68438"/>
    </cofactor>
    <text evidence="1">Fe-coproporphyrin III acts both as a substrate and a redox cofactor.</text>
</comment>
<comment type="pathway">
    <text evidence="1">Porphyrin-containing compound metabolism; protoheme biosynthesis.</text>
</comment>
<comment type="similarity">
    <text evidence="1">Belongs to the ChdC family. Type 1 subfamily.</text>
</comment>
<feature type="chain" id="PRO_1000145921" description="Coproheme decarboxylase">
    <location>
        <begin position="1"/>
        <end position="247"/>
    </location>
</feature>
<feature type="active site" evidence="1">
    <location>
        <position position="143"/>
    </location>
</feature>
<feature type="binding site" evidence="1">
    <location>
        <position position="129"/>
    </location>
    <ligand>
        <name>Fe-coproporphyrin III</name>
        <dbReference type="ChEBI" id="CHEBI:68438"/>
    </ligand>
</feature>
<feature type="binding site" evidence="1">
    <location>
        <begin position="143"/>
        <end position="147"/>
    </location>
    <ligand>
        <name>Fe-coproporphyrin III</name>
        <dbReference type="ChEBI" id="CHEBI:68438"/>
    </ligand>
</feature>
<feature type="binding site" description="axial binding residue" evidence="1">
    <location>
        <position position="170"/>
    </location>
    <ligand>
        <name>Fe-coproporphyrin III</name>
        <dbReference type="ChEBI" id="CHEBI:68438"/>
    </ligand>
    <ligandPart>
        <name>Fe</name>
        <dbReference type="ChEBI" id="CHEBI:18248"/>
    </ligandPart>
</feature>
<feature type="binding site" evidence="1">
    <location>
        <position position="183"/>
    </location>
    <ligand>
        <name>Fe-coproporphyrin III</name>
        <dbReference type="ChEBI" id="CHEBI:68438"/>
    </ligand>
</feature>
<feature type="binding site" evidence="1">
    <location>
        <position position="221"/>
    </location>
    <ligand>
        <name>Fe-coproporphyrin III</name>
        <dbReference type="ChEBI" id="CHEBI:68438"/>
    </ligand>
</feature>
<reference key="1">
    <citation type="submission" date="2008-10" db="EMBL/GenBank/DDBJ databases">
        <title>Genome sequence of Bacillus cereus AH820.</title>
        <authorList>
            <person name="Dodson R.J."/>
            <person name="Durkin A.S."/>
            <person name="Rosovitz M.J."/>
            <person name="Rasko D.A."/>
            <person name="Hoffmaster A."/>
            <person name="Ravel J."/>
            <person name="Sutton G."/>
        </authorList>
    </citation>
    <scope>NUCLEOTIDE SEQUENCE [LARGE SCALE GENOMIC DNA]</scope>
    <source>
        <strain>AH820</strain>
    </source>
</reference>
<protein>
    <recommendedName>
        <fullName evidence="1">Coproheme decarboxylase</fullName>
        <ecNumber evidence="1">1.3.98.5</ecNumber>
    </recommendedName>
    <alternativeName>
        <fullName evidence="1">Coproheme III oxidative decarboxylase</fullName>
    </alternativeName>
    <alternativeName>
        <fullName evidence="1">Hydrogen peroxide-dependent heme synthase</fullName>
    </alternativeName>
</protein>
<sequence>MSEATTTLDGWYCLHDLRSIDWAAWKTLSSDERGQAVSEFLNVVEKWNDVAAAKKGSHAMYTVVGQKADIMLMILRPTMEELNEIETELNKTTLAEYMVPAYSYVSVVELSNYLPADEDPYQNPQILARLYPELPKANHICFYPMDKRRQGDDNWYMLPMEERKKMMYSHSKIGRQYAGKVRQVISGSVGFDDFEWGVTLFADDILQFKKLIYEMRFDEVSARYGEFGTFFVGNILPDEKVEKFLHI</sequence>
<evidence type="ECO:0000255" key="1">
    <source>
        <dbReference type="HAMAP-Rule" id="MF_01442"/>
    </source>
</evidence>
<accession>B7JHL3</accession>
<organism>
    <name type="scientific">Bacillus cereus (strain AH820)</name>
    <dbReference type="NCBI Taxonomy" id="405535"/>
    <lineage>
        <taxon>Bacteria</taxon>
        <taxon>Bacillati</taxon>
        <taxon>Bacillota</taxon>
        <taxon>Bacilli</taxon>
        <taxon>Bacillales</taxon>
        <taxon>Bacillaceae</taxon>
        <taxon>Bacillus</taxon>
        <taxon>Bacillus cereus group</taxon>
    </lineage>
</organism>